<feature type="chain" id="PRO_0000206713" description="HMG-Y-related protein A">
    <location>
        <begin position="1"/>
        <end position="176"/>
    </location>
</feature>
<feature type="domain" description="H15" evidence="1">
    <location>
        <begin position="11"/>
        <end position="78"/>
    </location>
</feature>
<feature type="DNA-binding region" description="A.T hook 1">
    <location>
        <begin position="84"/>
        <end position="92"/>
    </location>
</feature>
<feature type="DNA-binding region" description="A.T hook 2">
    <location>
        <begin position="106"/>
        <end position="114"/>
    </location>
</feature>
<feature type="DNA-binding region" description="A.T hook 3">
    <location>
        <begin position="132"/>
        <end position="140"/>
    </location>
</feature>
<feature type="DNA-binding region" description="A.T hook 4">
    <location>
        <begin position="156"/>
        <end position="164"/>
    </location>
</feature>
<feature type="region of interest" description="Disordered" evidence="2">
    <location>
        <begin position="64"/>
        <end position="176"/>
    </location>
</feature>
<feature type="compositionally biased region" description="Low complexity" evidence="2">
    <location>
        <begin position="143"/>
        <end position="157"/>
    </location>
</feature>
<proteinExistence type="evidence at transcript level"/>
<reference key="1">
    <citation type="journal article" date="1991" name="Nucleic Acids Res.">
        <title>A soybean embryo cDNA encodes a DNA binding protein with histone and HMG-protein-like domains.</title>
        <authorList>
            <person name="Laux T."/>
            <person name="Seurinck J."/>
            <person name="Goldberg R.B."/>
        </authorList>
    </citation>
    <scope>NUCLEOTIDE SEQUENCE [MRNA]</scope>
    <source>
        <strain>cv. Dare</strain>
        <tissue>Embryo</tissue>
    </source>
</reference>
<evidence type="ECO:0000255" key="1">
    <source>
        <dbReference type="PROSITE-ProRule" id="PRU00837"/>
    </source>
</evidence>
<evidence type="ECO:0000256" key="2">
    <source>
        <dbReference type="SAM" id="MobiDB-lite"/>
    </source>
</evidence>
<evidence type="ECO:0000305" key="3"/>
<sequence>MATEEVNKPQSLPPYPEMIVKTLEALNEPNGSNKSAISKYIETTYGELPDATVLGSHLNKMKDSGELSFKQNNYMKADPNAPPKRGRGRPPKPKTPLPPGTVVSPPRPRGRPPKDPNAPPKSPKAKATPGSGRPRGRPKKVPRSPAVAAPTAVSSGRPRGRPPKVKPQLTEVSVES</sequence>
<keyword id="KW-0238">DNA-binding</keyword>
<keyword id="KW-0539">Nucleus</keyword>
<keyword id="KW-1185">Reference proteome</keyword>
<keyword id="KW-0677">Repeat</keyword>
<protein>
    <recommendedName>
        <fullName>HMG-Y-related protein A</fullName>
    </recommendedName>
    <alternativeName>
        <fullName>Protein SB16A</fullName>
    </alternativeName>
</protein>
<accession>Q00423</accession>
<organism>
    <name type="scientific">Glycine max</name>
    <name type="common">Soybean</name>
    <name type="synonym">Glycine hispida</name>
    <dbReference type="NCBI Taxonomy" id="3847"/>
    <lineage>
        <taxon>Eukaryota</taxon>
        <taxon>Viridiplantae</taxon>
        <taxon>Streptophyta</taxon>
        <taxon>Embryophyta</taxon>
        <taxon>Tracheophyta</taxon>
        <taxon>Spermatophyta</taxon>
        <taxon>Magnoliopsida</taxon>
        <taxon>eudicotyledons</taxon>
        <taxon>Gunneridae</taxon>
        <taxon>Pentapetalae</taxon>
        <taxon>rosids</taxon>
        <taxon>fabids</taxon>
        <taxon>Fabales</taxon>
        <taxon>Fabaceae</taxon>
        <taxon>Papilionoideae</taxon>
        <taxon>50 kb inversion clade</taxon>
        <taxon>NPAAA clade</taxon>
        <taxon>indigoferoid/millettioid clade</taxon>
        <taxon>Phaseoleae</taxon>
        <taxon>Glycine</taxon>
        <taxon>Glycine subgen. Soja</taxon>
    </lineage>
</organism>
<dbReference type="EMBL" id="X58246">
    <property type="protein sequence ID" value="CAA41201.1"/>
    <property type="molecule type" value="mRNA"/>
</dbReference>
<dbReference type="PIR" id="S22310">
    <property type="entry name" value="S22310"/>
</dbReference>
<dbReference type="RefSeq" id="NP_001238502.1">
    <property type="nucleotide sequence ID" value="NM_001251573.1"/>
</dbReference>
<dbReference type="SMR" id="Q00423"/>
<dbReference type="FunCoup" id="Q00423">
    <property type="interactions" value="347"/>
</dbReference>
<dbReference type="PaxDb" id="3847-GLYMA02G41230.1"/>
<dbReference type="GeneID" id="548080"/>
<dbReference type="KEGG" id="gmx:548080"/>
<dbReference type="eggNOG" id="ENOG502RXFH">
    <property type="taxonomic scope" value="Eukaryota"/>
</dbReference>
<dbReference type="InParanoid" id="Q00423"/>
<dbReference type="OrthoDB" id="1110759at2759"/>
<dbReference type="Proteomes" id="UP000008827">
    <property type="component" value="Unplaced"/>
</dbReference>
<dbReference type="GO" id="GO:0005730">
    <property type="term" value="C:nucleolus"/>
    <property type="evidence" value="ECO:0000318"/>
    <property type="project" value="GO_Central"/>
</dbReference>
<dbReference type="GO" id="GO:0000786">
    <property type="term" value="C:nucleosome"/>
    <property type="evidence" value="ECO:0007669"/>
    <property type="project" value="InterPro"/>
</dbReference>
<dbReference type="GO" id="GO:0005634">
    <property type="term" value="C:nucleus"/>
    <property type="evidence" value="ECO:0000318"/>
    <property type="project" value="GO_Central"/>
</dbReference>
<dbReference type="GO" id="GO:0003690">
    <property type="term" value="F:double-stranded DNA binding"/>
    <property type="evidence" value="ECO:0000318"/>
    <property type="project" value="GO_Central"/>
</dbReference>
<dbReference type="GO" id="GO:0008168">
    <property type="term" value="F:methyltransferase activity"/>
    <property type="evidence" value="ECO:0007669"/>
    <property type="project" value="UniProtKB-ARBA"/>
</dbReference>
<dbReference type="GO" id="GO:0031492">
    <property type="term" value="F:nucleosomal DNA binding"/>
    <property type="evidence" value="ECO:0000318"/>
    <property type="project" value="GO_Central"/>
</dbReference>
<dbReference type="GO" id="GO:0030261">
    <property type="term" value="P:chromosome condensation"/>
    <property type="evidence" value="ECO:0000318"/>
    <property type="project" value="GO_Central"/>
</dbReference>
<dbReference type="GO" id="GO:0045910">
    <property type="term" value="P:negative regulation of DNA recombination"/>
    <property type="evidence" value="ECO:0000318"/>
    <property type="project" value="GO_Central"/>
</dbReference>
<dbReference type="GO" id="GO:0006334">
    <property type="term" value="P:nucleosome assembly"/>
    <property type="evidence" value="ECO:0007669"/>
    <property type="project" value="InterPro"/>
</dbReference>
<dbReference type="GO" id="GO:0006355">
    <property type="term" value="P:regulation of DNA-templated transcription"/>
    <property type="evidence" value="ECO:0007669"/>
    <property type="project" value="InterPro"/>
</dbReference>
<dbReference type="FunFam" id="1.10.10.10:FF:000493">
    <property type="entry name" value="HMG-Y-related protein A"/>
    <property type="match status" value="1"/>
</dbReference>
<dbReference type="Gene3D" id="1.10.10.10">
    <property type="entry name" value="Winged helix-like DNA-binding domain superfamily/Winged helix DNA-binding domain"/>
    <property type="match status" value="1"/>
</dbReference>
<dbReference type="InterPro" id="IPR017956">
    <property type="entry name" value="AT_hook_DNA-bd_motif"/>
</dbReference>
<dbReference type="InterPro" id="IPR005818">
    <property type="entry name" value="Histone_H1/H5_H15"/>
</dbReference>
<dbReference type="InterPro" id="IPR000116">
    <property type="entry name" value="HMGA"/>
</dbReference>
<dbReference type="InterPro" id="IPR036388">
    <property type="entry name" value="WH-like_DNA-bd_sf"/>
</dbReference>
<dbReference type="InterPro" id="IPR036390">
    <property type="entry name" value="WH_DNA-bd_sf"/>
</dbReference>
<dbReference type="PANTHER" id="PTHR11467">
    <property type="entry name" value="HISTONE H1"/>
    <property type="match status" value="1"/>
</dbReference>
<dbReference type="PANTHER" id="PTHR11467:SF162">
    <property type="entry name" value="HMG-Y-RELATED PROTEIN A"/>
    <property type="match status" value="1"/>
</dbReference>
<dbReference type="Pfam" id="PF00538">
    <property type="entry name" value="Linker_histone"/>
    <property type="match status" value="1"/>
</dbReference>
<dbReference type="PRINTS" id="PR00929">
    <property type="entry name" value="ATHOOK"/>
</dbReference>
<dbReference type="PRINTS" id="PR00930">
    <property type="entry name" value="HIGHMOBLTYIY"/>
</dbReference>
<dbReference type="SMART" id="SM00384">
    <property type="entry name" value="AT_hook"/>
    <property type="match status" value="4"/>
</dbReference>
<dbReference type="SMART" id="SM00526">
    <property type="entry name" value="H15"/>
    <property type="match status" value="1"/>
</dbReference>
<dbReference type="SUPFAM" id="SSF46785">
    <property type="entry name" value="Winged helix' DNA-binding domain"/>
    <property type="match status" value="1"/>
</dbReference>
<dbReference type="PROSITE" id="PS51504">
    <property type="entry name" value="H15"/>
    <property type="match status" value="1"/>
</dbReference>
<name>HMGYA_SOYBN</name>
<comment type="subcellular location">
    <subcellularLocation>
        <location evidence="1">Nucleus</location>
    </subcellularLocation>
</comment>
<comment type="similarity">
    <text evidence="3">Belongs to the HMGA family.</text>
</comment>